<gene>
    <name type="primary">Rrs1</name>
    <name type="synonym">Rrr</name>
    <name type="ORF">MNCb-2643</name>
</gene>
<feature type="chain" id="PRO_0000185375" description="Ribosome biogenesis regulatory protein homolog">
    <location>
        <begin position="1"/>
        <end position="365"/>
    </location>
</feature>
<feature type="region of interest" description="Disordered" evidence="2">
    <location>
        <begin position="200"/>
        <end position="255"/>
    </location>
</feature>
<feature type="region of interest" description="Disordered" evidence="2">
    <location>
        <begin position="281"/>
        <end position="365"/>
    </location>
</feature>
<feature type="compositionally biased region" description="Basic and acidic residues" evidence="2">
    <location>
        <begin position="235"/>
        <end position="245"/>
    </location>
</feature>
<feature type="compositionally biased region" description="Basic residues" evidence="2">
    <location>
        <begin position="302"/>
        <end position="325"/>
    </location>
</feature>
<feature type="compositionally biased region" description="Basic residues" evidence="2">
    <location>
        <begin position="351"/>
        <end position="365"/>
    </location>
</feature>
<feature type="modified residue" description="N-acetylmethionine" evidence="1">
    <location>
        <position position="1"/>
    </location>
</feature>
<feature type="modified residue" description="Citrulline" evidence="3">
    <location>
        <position position="273"/>
    </location>
</feature>
<feature type="cross-link" description="Glycyl lysine isopeptide (Lys-Gly) (interchain with G-Cter in SUMO2)" evidence="1">
    <location>
        <position position="154"/>
    </location>
</feature>
<feature type="cross-link" description="Glycyl lysine isopeptide (Lys-Gly) (interchain with G-Cter in SUMO2)" evidence="1">
    <location>
        <position position="226"/>
    </location>
</feature>
<feature type="cross-link" description="Glycyl lysine isopeptide (Lys-Gly) (interchain with G-Cter in SUMO2)" evidence="1">
    <location>
        <position position="266"/>
    </location>
</feature>
<feature type="sequence conflict" description="In Ref. 2; BAB26750." evidence="4" ref="2">
    <original>E</original>
    <variation>V</variation>
    <location>
        <position position="135"/>
    </location>
</feature>
<feature type="sequence conflict" description="In Ref. 2; BAB31912." evidence="4" ref="2">
    <original>N</original>
    <variation>G</variation>
    <location>
        <position position="185"/>
    </location>
</feature>
<feature type="sequence conflict" description="In Ref. 1; BAA95072." evidence="4" ref="1">
    <original>K</original>
    <variation>R</variation>
    <location>
        <position position="324"/>
    </location>
</feature>
<accession>Q9CYH6</accession>
<accession>Q3UQW6</accession>
<accession>Q9CS27</accession>
<accession>Q9D2B2</accession>
<accession>Q9D6M6</accession>
<accession>Q9JJC1</accession>
<keyword id="KW-0007">Acetylation</keyword>
<keyword id="KW-0164">Citrullination</keyword>
<keyword id="KW-1017">Isopeptide bond</keyword>
<keyword id="KW-0539">Nucleus</keyword>
<keyword id="KW-1185">Reference proteome</keyword>
<keyword id="KW-0690">Ribosome biogenesis</keyword>
<keyword id="KW-0832">Ubl conjugation</keyword>
<protein>
    <recommendedName>
        <fullName>Ribosome biogenesis regulatory protein homolog</fullName>
    </recommendedName>
</protein>
<sequence>MEGQRVEELLAKAEQEEAEKLQRITVHKELELEFDLGNLLASDRNPPTVLRQAGPSPEAELRALARDNTQLLINQLWRLPTERVEEAVVARLPEPATRLPREKPLPRPRPLTRWQQFARLKGIRPKKKTNLVWDEASGQWRRRWGYKRARDDTKEWLIEVPGSADPMEDQFAKRTQAKKERVAKNELNRLRNLARAHKMQMPSSAGLHPTGHQSKEELGRAMQVAKVSTASVGRFQERLPKEKAPRGSGKKRKFQPLFGDFAAEKKNQLELLRVMNSKKPRLDVTRATNKQMREEDQEEAAKRRKMSQKGKRKGGRQGPSGKRKGGPPGQGEKRKGGLGSKKHSWPSALAGKKKGVPPQGGKRRK</sequence>
<evidence type="ECO:0000250" key="1">
    <source>
        <dbReference type="UniProtKB" id="Q15050"/>
    </source>
</evidence>
<evidence type="ECO:0000256" key="2">
    <source>
        <dbReference type="SAM" id="MobiDB-lite"/>
    </source>
</evidence>
<evidence type="ECO:0000269" key="3">
    <source>
    </source>
</evidence>
<evidence type="ECO:0000305" key="4"/>
<name>RRS1_MOUSE</name>
<organism>
    <name type="scientific">Mus musculus</name>
    <name type="common">Mouse</name>
    <dbReference type="NCBI Taxonomy" id="10090"/>
    <lineage>
        <taxon>Eukaryota</taxon>
        <taxon>Metazoa</taxon>
        <taxon>Chordata</taxon>
        <taxon>Craniata</taxon>
        <taxon>Vertebrata</taxon>
        <taxon>Euteleostomi</taxon>
        <taxon>Mammalia</taxon>
        <taxon>Eutheria</taxon>
        <taxon>Euarchontoglires</taxon>
        <taxon>Glires</taxon>
        <taxon>Rodentia</taxon>
        <taxon>Myomorpha</taxon>
        <taxon>Muroidea</taxon>
        <taxon>Muridae</taxon>
        <taxon>Murinae</taxon>
        <taxon>Mus</taxon>
        <taxon>Mus</taxon>
    </lineage>
</organism>
<comment type="function">
    <text evidence="1">Involved in ribosomal large subunit assembly. May regulate the localization of the 5S RNP/5S ribonucleoprotein particle to the nucleolus.</text>
</comment>
<comment type="subunit">
    <text evidence="1">Component of a hexameric 5S RNP precursor complex, composed of 5S RNA, RRS1, RPF2/BXDC1, RPL5, RPL11 and HEATR3; this complex acts as a precursor for ribosome assembly.</text>
</comment>
<comment type="subcellular location">
    <subcellularLocation>
        <location evidence="1">Nucleus</location>
        <location evidence="1">Nucleolus</location>
    </subcellularLocation>
</comment>
<comment type="PTM">
    <text evidence="3">Citrullinated by PADI4.</text>
</comment>
<comment type="similarity">
    <text evidence="4">Belongs to the RRS1 family.</text>
</comment>
<reference key="1">
    <citation type="submission" date="2000-04" db="EMBL/GenBank/DDBJ databases">
        <title>Isolation of full-length cDNA clones from mouse brain cDNA library made by oligo-capping method.</title>
        <authorList>
            <person name="Osada N."/>
            <person name="Kusuda J."/>
            <person name="Tanuma R."/>
            <person name="Ito A."/>
            <person name="Hirata M."/>
            <person name="Sugano S."/>
            <person name="Hashimoto K."/>
        </authorList>
    </citation>
    <scope>NUCLEOTIDE SEQUENCE [LARGE SCALE MRNA]</scope>
    <source>
        <strain>C57BL/6J</strain>
        <tissue>Brain</tissue>
    </source>
</reference>
<reference key="2">
    <citation type="journal article" date="2005" name="Science">
        <title>The transcriptional landscape of the mammalian genome.</title>
        <authorList>
            <person name="Carninci P."/>
            <person name="Kasukawa T."/>
            <person name="Katayama S."/>
            <person name="Gough J."/>
            <person name="Frith M.C."/>
            <person name="Maeda N."/>
            <person name="Oyama R."/>
            <person name="Ravasi T."/>
            <person name="Lenhard B."/>
            <person name="Wells C."/>
            <person name="Kodzius R."/>
            <person name="Shimokawa K."/>
            <person name="Bajic V.B."/>
            <person name="Brenner S.E."/>
            <person name="Batalov S."/>
            <person name="Forrest A.R."/>
            <person name="Zavolan M."/>
            <person name="Davis M.J."/>
            <person name="Wilming L.G."/>
            <person name="Aidinis V."/>
            <person name="Allen J.E."/>
            <person name="Ambesi-Impiombato A."/>
            <person name="Apweiler R."/>
            <person name="Aturaliya R.N."/>
            <person name="Bailey T.L."/>
            <person name="Bansal M."/>
            <person name="Baxter L."/>
            <person name="Beisel K.W."/>
            <person name="Bersano T."/>
            <person name="Bono H."/>
            <person name="Chalk A.M."/>
            <person name="Chiu K.P."/>
            <person name="Choudhary V."/>
            <person name="Christoffels A."/>
            <person name="Clutterbuck D.R."/>
            <person name="Crowe M.L."/>
            <person name="Dalla E."/>
            <person name="Dalrymple B.P."/>
            <person name="de Bono B."/>
            <person name="Della Gatta G."/>
            <person name="di Bernardo D."/>
            <person name="Down T."/>
            <person name="Engstrom P."/>
            <person name="Fagiolini M."/>
            <person name="Faulkner G."/>
            <person name="Fletcher C.F."/>
            <person name="Fukushima T."/>
            <person name="Furuno M."/>
            <person name="Futaki S."/>
            <person name="Gariboldi M."/>
            <person name="Georgii-Hemming P."/>
            <person name="Gingeras T.R."/>
            <person name="Gojobori T."/>
            <person name="Green R.E."/>
            <person name="Gustincich S."/>
            <person name="Harbers M."/>
            <person name="Hayashi Y."/>
            <person name="Hensch T.K."/>
            <person name="Hirokawa N."/>
            <person name="Hill D."/>
            <person name="Huminiecki L."/>
            <person name="Iacono M."/>
            <person name="Ikeo K."/>
            <person name="Iwama A."/>
            <person name="Ishikawa T."/>
            <person name="Jakt M."/>
            <person name="Kanapin A."/>
            <person name="Katoh M."/>
            <person name="Kawasawa Y."/>
            <person name="Kelso J."/>
            <person name="Kitamura H."/>
            <person name="Kitano H."/>
            <person name="Kollias G."/>
            <person name="Krishnan S.P."/>
            <person name="Kruger A."/>
            <person name="Kummerfeld S.K."/>
            <person name="Kurochkin I.V."/>
            <person name="Lareau L.F."/>
            <person name="Lazarevic D."/>
            <person name="Lipovich L."/>
            <person name="Liu J."/>
            <person name="Liuni S."/>
            <person name="McWilliam S."/>
            <person name="Madan Babu M."/>
            <person name="Madera M."/>
            <person name="Marchionni L."/>
            <person name="Matsuda H."/>
            <person name="Matsuzawa S."/>
            <person name="Miki H."/>
            <person name="Mignone F."/>
            <person name="Miyake S."/>
            <person name="Morris K."/>
            <person name="Mottagui-Tabar S."/>
            <person name="Mulder N."/>
            <person name="Nakano N."/>
            <person name="Nakauchi H."/>
            <person name="Ng P."/>
            <person name="Nilsson R."/>
            <person name="Nishiguchi S."/>
            <person name="Nishikawa S."/>
            <person name="Nori F."/>
            <person name="Ohara O."/>
            <person name="Okazaki Y."/>
            <person name="Orlando V."/>
            <person name="Pang K.C."/>
            <person name="Pavan W.J."/>
            <person name="Pavesi G."/>
            <person name="Pesole G."/>
            <person name="Petrovsky N."/>
            <person name="Piazza S."/>
            <person name="Reed J."/>
            <person name="Reid J.F."/>
            <person name="Ring B.Z."/>
            <person name="Ringwald M."/>
            <person name="Rost B."/>
            <person name="Ruan Y."/>
            <person name="Salzberg S.L."/>
            <person name="Sandelin A."/>
            <person name="Schneider C."/>
            <person name="Schoenbach C."/>
            <person name="Sekiguchi K."/>
            <person name="Semple C.A."/>
            <person name="Seno S."/>
            <person name="Sessa L."/>
            <person name="Sheng Y."/>
            <person name="Shibata Y."/>
            <person name="Shimada H."/>
            <person name="Shimada K."/>
            <person name="Silva D."/>
            <person name="Sinclair B."/>
            <person name="Sperling S."/>
            <person name="Stupka E."/>
            <person name="Sugiura K."/>
            <person name="Sultana R."/>
            <person name="Takenaka Y."/>
            <person name="Taki K."/>
            <person name="Tammoja K."/>
            <person name="Tan S.L."/>
            <person name="Tang S."/>
            <person name="Taylor M.S."/>
            <person name="Tegner J."/>
            <person name="Teichmann S.A."/>
            <person name="Ueda H.R."/>
            <person name="van Nimwegen E."/>
            <person name="Verardo R."/>
            <person name="Wei C.L."/>
            <person name="Yagi K."/>
            <person name="Yamanishi H."/>
            <person name="Zabarovsky E."/>
            <person name="Zhu S."/>
            <person name="Zimmer A."/>
            <person name="Hide W."/>
            <person name="Bult C."/>
            <person name="Grimmond S.M."/>
            <person name="Teasdale R.D."/>
            <person name="Liu E.T."/>
            <person name="Brusic V."/>
            <person name="Quackenbush J."/>
            <person name="Wahlestedt C."/>
            <person name="Mattick J.S."/>
            <person name="Hume D.A."/>
            <person name="Kai C."/>
            <person name="Sasaki D."/>
            <person name="Tomaru Y."/>
            <person name="Fukuda S."/>
            <person name="Kanamori-Katayama M."/>
            <person name="Suzuki M."/>
            <person name="Aoki J."/>
            <person name="Arakawa T."/>
            <person name="Iida J."/>
            <person name="Imamura K."/>
            <person name="Itoh M."/>
            <person name="Kato T."/>
            <person name="Kawaji H."/>
            <person name="Kawagashira N."/>
            <person name="Kawashima T."/>
            <person name="Kojima M."/>
            <person name="Kondo S."/>
            <person name="Konno H."/>
            <person name="Nakano K."/>
            <person name="Ninomiya N."/>
            <person name="Nishio T."/>
            <person name="Okada M."/>
            <person name="Plessy C."/>
            <person name="Shibata K."/>
            <person name="Shiraki T."/>
            <person name="Suzuki S."/>
            <person name="Tagami M."/>
            <person name="Waki K."/>
            <person name="Watahiki A."/>
            <person name="Okamura-Oho Y."/>
            <person name="Suzuki H."/>
            <person name="Kawai J."/>
            <person name="Hayashizaki Y."/>
        </authorList>
    </citation>
    <scope>NUCLEOTIDE SEQUENCE [LARGE SCALE MRNA]</scope>
    <source>
        <strain>C57BL/6J</strain>
        <tissue>Embryo</tissue>
        <tissue>Eye</tissue>
        <tissue>Pituitary</tissue>
        <tissue>Tongue</tissue>
    </source>
</reference>
<reference key="3">
    <citation type="journal article" date="2004" name="Genome Res.">
        <title>The status, quality, and expansion of the NIH full-length cDNA project: the Mammalian Gene Collection (MGC).</title>
        <authorList>
            <consortium name="The MGC Project Team"/>
        </authorList>
    </citation>
    <scope>NUCLEOTIDE SEQUENCE [LARGE SCALE MRNA]</scope>
    <source>
        <strain>C57BL/6J</strain>
        <tissue>Kidney</tissue>
        <tissue>Mammary gland</tissue>
    </source>
</reference>
<reference key="4">
    <citation type="journal article" date="2014" name="Nature">
        <title>Citrullination regulates pluripotency and histone H1 binding to chromatin.</title>
        <authorList>
            <person name="Christophorou M.A."/>
            <person name="Castelo-Branco G."/>
            <person name="Halley-Stott R.P."/>
            <person name="Oliveira C.S."/>
            <person name="Loos R."/>
            <person name="Radzisheuskaya A."/>
            <person name="Mowen K.A."/>
            <person name="Bertone P."/>
            <person name="Silva J.C."/>
            <person name="Zernicka-Goetz M."/>
            <person name="Nielsen M.L."/>
            <person name="Gurdon J.B."/>
            <person name="Kouzarides T."/>
        </authorList>
    </citation>
    <scope>CITRULLINATION AT ARG-273</scope>
</reference>
<proteinExistence type="evidence at protein level"/>
<dbReference type="EMBL" id="AB041589">
    <property type="protein sequence ID" value="BAA95072.1"/>
    <property type="molecule type" value="mRNA"/>
</dbReference>
<dbReference type="EMBL" id="AK010178">
    <property type="protein sequence ID" value="BAB26750.1"/>
    <property type="molecule type" value="mRNA"/>
</dbReference>
<dbReference type="EMBL" id="AK017683">
    <property type="protein sequence ID" value="BAB30871.1"/>
    <property type="molecule type" value="mRNA"/>
</dbReference>
<dbReference type="EMBL" id="AK019257">
    <property type="protein sequence ID" value="BAB31631.1"/>
    <property type="molecule type" value="mRNA"/>
</dbReference>
<dbReference type="EMBL" id="AK019913">
    <property type="protein sequence ID" value="BAB31912.1"/>
    <property type="molecule type" value="mRNA"/>
</dbReference>
<dbReference type="EMBL" id="AK142041">
    <property type="protein sequence ID" value="BAE24922.1"/>
    <property type="molecule type" value="mRNA"/>
</dbReference>
<dbReference type="EMBL" id="BC003481">
    <property type="protein sequence ID" value="AAH03481.1"/>
    <property type="molecule type" value="mRNA"/>
</dbReference>
<dbReference type="EMBL" id="BC055925">
    <property type="protein sequence ID" value="AAH55925.1"/>
    <property type="molecule type" value="mRNA"/>
</dbReference>
<dbReference type="CCDS" id="CCDS14811.1"/>
<dbReference type="RefSeq" id="NP_067486.2">
    <property type="nucleotide sequence ID" value="NM_021511.2"/>
</dbReference>
<dbReference type="SMR" id="Q9CYH6"/>
<dbReference type="BioGRID" id="208485">
    <property type="interactions" value="6"/>
</dbReference>
<dbReference type="CORUM" id="Q9CYH6"/>
<dbReference type="FunCoup" id="Q9CYH6">
    <property type="interactions" value="2570"/>
</dbReference>
<dbReference type="STRING" id="10090.ENSMUSP00000071955"/>
<dbReference type="iPTMnet" id="Q9CYH6"/>
<dbReference type="PhosphoSitePlus" id="Q9CYH6"/>
<dbReference type="SwissPalm" id="Q9CYH6"/>
<dbReference type="jPOST" id="Q9CYH6"/>
<dbReference type="PaxDb" id="10090-ENSMUSP00000071955"/>
<dbReference type="PeptideAtlas" id="Q9CYH6"/>
<dbReference type="ProteomicsDB" id="299935"/>
<dbReference type="Pumba" id="Q9CYH6"/>
<dbReference type="TopDownProteomics" id="Q9CYH6"/>
<dbReference type="Antibodypedia" id="24827">
    <property type="antibodies" value="195 antibodies from 28 providers"/>
</dbReference>
<dbReference type="DNASU" id="59014"/>
<dbReference type="Ensembl" id="ENSMUST00000072079.9">
    <property type="protein sequence ID" value="ENSMUSP00000071955.8"/>
    <property type="gene ID" value="ENSMUSG00000061024.9"/>
</dbReference>
<dbReference type="GeneID" id="59014"/>
<dbReference type="KEGG" id="mmu:59014"/>
<dbReference type="UCSC" id="uc007agk.2">
    <property type="organism name" value="mouse"/>
</dbReference>
<dbReference type="AGR" id="MGI:1929721"/>
<dbReference type="CTD" id="23212"/>
<dbReference type="MGI" id="MGI:1929721">
    <property type="gene designation" value="Rrs1"/>
</dbReference>
<dbReference type="VEuPathDB" id="HostDB:ENSMUSG00000061024"/>
<dbReference type="eggNOG" id="KOG1765">
    <property type="taxonomic scope" value="Eukaryota"/>
</dbReference>
<dbReference type="GeneTree" id="ENSGT00390000005213"/>
<dbReference type="HOGENOM" id="CLU_065163_1_0_1"/>
<dbReference type="InParanoid" id="Q9CYH6"/>
<dbReference type="OMA" id="ACDKNRI"/>
<dbReference type="OrthoDB" id="28455at2759"/>
<dbReference type="PhylomeDB" id="Q9CYH6"/>
<dbReference type="TreeFam" id="TF313067"/>
<dbReference type="BioGRID-ORCS" id="59014">
    <property type="hits" value="23 hits in 75 CRISPR screens"/>
</dbReference>
<dbReference type="ChiTaRS" id="Rrs1">
    <property type="organism name" value="mouse"/>
</dbReference>
<dbReference type="PRO" id="PR:Q9CYH6"/>
<dbReference type="Proteomes" id="UP000000589">
    <property type="component" value="Chromosome 1"/>
</dbReference>
<dbReference type="RNAct" id="Q9CYH6">
    <property type="molecule type" value="protein"/>
</dbReference>
<dbReference type="Bgee" id="ENSMUSG00000061024">
    <property type="expression patterns" value="Expressed in epiblast (generic) and 138 other cell types or tissues"/>
</dbReference>
<dbReference type="GO" id="GO:0000794">
    <property type="term" value="C:condensed nuclear chromosome"/>
    <property type="evidence" value="ECO:0007669"/>
    <property type="project" value="Ensembl"/>
</dbReference>
<dbReference type="GO" id="GO:0005783">
    <property type="term" value="C:endoplasmic reticulum"/>
    <property type="evidence" value="ECO:0000314"/>
    <property type="project" value="UniProtKB"/>
</dbReference>
<dbReference type="GO" id="GO:0005730">
    <property type="term" value="C:nucleolus"/>
    <property type="evidence" value="ECO:0000314"/>
    <property type="project" value="UniProtKB"/>
</dbReference>
<dbReference type="GO" id="GO:0005654">
    <property type="term" value="C:nucleoplasm"/>
    <property type="evidence" value="ECO:0007669"/>
    <property type="project" value="Ensembl"/>
</dbReference>
<dbReference type="GO" id="GO:0008097">
    <property type="term" value="F:5S rRNA binding"/>
    <property type="evidence" value="ECO:0000250"/>
    <property type="project" value="UniProtKB"/>
</dbReference>
<dbReference type="GO" id="GO:0002244">
    <property type="term" value="P:hematopoietic progenitor cell differentiation"/>
    <property type="evidence" value="ECO:0000315"/>
    <property type="project" value="MGI"/>
</dbReference>
<dbReference type="GO" id="GO:0007080">
    <property type="term" value="P:mitotic metaphase chromosome alignment"/>
    <property type="evidence" value="ECO:0007669"/>
    <property type="project" value="Ensembl"/>
</dbReference>
<dbReference type="GO" id="GO:1902570">
    <property type="term" value="P:protein localization to nucleolus"/>
    <property type="evidence" value="ECO:0000250"/>
    <property type="project" value="UniProtKB"/>
</dbReference>
<dbReference type="GO" id="GO:1901796">
    <property type="term" value="P:regulation of signal transduction by p53 class mediator"/>
    <property type="evidence" value="ECO:0000250"/>
    <property type="project" value="UniProtKB"/>
</dbReference>
<dbReference type="GO" id="GO:0000027">
    <property type="term" value="P:ribosomal large subunit assembly"/>
    <property type="evidence" value="ECO:0000250"/>
    <property type="project" value="UniProtKB"/>
</dbReference>
<dbReference type="InterPro" id="IPR007023">
    <property type="entry name" value="Ribosom_reg"/>
</dbReference>
<dbReference type="PANTHER" id="PTHR17602">
    <property type="entry name" value="RIBOSOME BIOGENESIS REGULATORY PROTEIN"/>
    <property type="match status" value="1"/>
</dbReference>
<dbReference type="PANTHER" id="PTHR17602:SF4">
    <property type="entry name" value="RIBOSOME BIOGENESIS REGULATORY PROTEIN HOMOLOG"/>
    <property type="match status" value="1"/>
</dbReference>
<dbReference type="Pfam" id="PF04939">
    <property type="entry name" value="RRS1"/>
    <property type="match status" value="1"/>
</dbReference>